<feature type="chain" id="PRO_1000090278" description="Holliday junction branch migration complex subunit RuvA">
    <location>
        <begin position="1"/>
        <end position="194"/>
    </location>
</feature>
<feature type="region of interest" description="Domain I" evidence="1">
    <location>
        <begin position="1"/>
        <end position="64"/>
    </location>
</feature>
<feature type="region of interest" description="Domain II" evidence="1">
    <location>
        <begin position="65"/>
        <end position="143"/>
    </location>
</feature>
<feature type="region of interest" description="Flexible linker" evidence="1">
    <location>
        <begin position="144"/>
        <end position="150"/>
    </location>
</feature>
<feature type="region of interest" description="Domain III" evidence="1">
    <location>
        <begin position="150"/>
        <end position="194"/>
    </location>
</feature>
<gene>
    <name evidence="1" type="primary">ruvA</name>
    <name type="ordered locus">Aasi_1446</name>
</gene>
<proteinExistence type="inferred from homology"/>
<evidence type="ECO:0000255" key="1">
    <source>
        <dbReference type="HAMAP-Rule" id="MF_00031"/>
    </source>
</evidence>
<reference key="1">
    <citation type="journal article" date="2010" name="J. Bacteriol.">
        <title>The genome of the amoeba symbiont 'Candidatus Amoebophilus asiaticus' reveals common mechanisms for host cell interaction among amoeba-associated bacteria.</title>
        <authorList>
            <person name="Schmitz-Esser S."/>
            <person name="Tischler P."/>
            <person name="Arnold R."/>
            <person name="Montanaro J."/>
            <person name="Wagner M."/>
            <person name="Rattei T."/>
            <person name="Horn M."/>
        </authorList>
    </citation>
    <scope>NUCLEOTIDE SEQUENCE [LARGE SCALE GENOMIC DNA]</scope>
    <source>
        <strain>5a2</strain>
    </source>
</reference>
<keyword id="KW-0963">Cytoplasm</keyword>
<keyword id="KW-0227">DNA damage</keyword>
<keyword id="KW-0233">DNA recombination</keyword>
<keyword id="KW-0234">DNA repair</keyword>
<keyword id="KW-0238">DNA-binding</keyword>
<keyword id="KW-1185">Reference proteome</keyword>
<organism>
    <name type="scientific">Amoebophilus asiaticus (strain 5a2)</name>
    <dbReference type="NCBI Taxonomy" id="452471"/>
    <lineage>
        <taxon>Bacteria</taxon>
        <taxon>Pseudomonadati</taxon>
        <taxon>Bacteroidota</taxon>
        <taxon>Cytophagia</taxon>
        <taxon>Cytophagales</taxon>
        <taxon>Amoebophilaceae</taxon>
        <taxon>Candidatus Amoebophilus</taxon>
    </lineage>
</organism>
<sequence length="194" mass="20907">MIAYIQGSITYKSPTQLIVDVGGIGYELQISLQTYDSLKDIAASCKIFTYLHITQDAHTLYGFSTIEEKQCFLQLLSVNGIGPRVAITILSALTPEALQQAIMTHDTITLQAVKGIGQKAAQRIILELQGKVGKVGNMLSLQPSGQEAIYQEALAALSKLGIHKSTAEKTVAAILKEHQGEITVESLIKLALKG</sequence>
<accession>B3EU33</accession>
<dbReference type="EMBL" id="CP001102">
    <property type="protein sequence ID" value="ACE06735.1"/>
    <property type="molecule type" value="Genomic_DNA"/>
</dbReference>
<dbReference type="RefSeq" id="WP_012473474.1">
    <property type="nucleotide sequence ID" value="NC_010830.1"/>
</dbReference>
<dbReference type="SMR" id="B3EU33"/>
<dbReference type="STRING" id="452471.Aasi_1446"/>
<dbReference type="KEGG" id="aas:Aasi_1446"/>
<dbReference type="eggNOG" id="COG0632">
    <property type="taxonomic scope" value="Bacteria"/>
</dbReference>
<dbReference type="HOGENOM" id="CLU_087936_3_0_10"/>
<dbReference type="OrthoDB" id="5293449at2"/>
<dbReference type="Proteomes" id="UP000001227">
    <property type="component" value="Chromosome"/>
</dbReference>
<dbReference type="GO" id="GO:0005737">
    <property type="term" value="C:cytoplasm"/>
    <property type="evidence" value="ECO:0007669"/>
    <property type="project" value="UniProtKB-SubCell"/>
</dbReference>
<dbReference type="GO" id="GO:0009379">
    <property type="term" value="C:Holliday junction helicase complex"/>
    <property type="evidence" value="ECO:0007669"/>
    <property type="project" value="InterPro"/>
</dbReference>
<dbReference type="GO" id="GO:0048476">
    <property type="term" value="C:Holliday junction resolvase complex"/>
    <property type="evidence" value="ECO:0007669"/>
    <property type="project" value="UniProtKB-UniRule"/>
</dbReference>
<dbReference type="GO" id="GO:0005524">
    <property type="term" value="F:ATP binding"/>
    <property type="evidence" value="ECO:0007669"/>
    <property type="project" value="InterPro"/>
</dbReference>
<dbReference type="GO" id="GO:0000400">
    <property type="term" value="F:four-way junction DNA binding"/>
    <property type="evidence" value="ECO:0007669"/>
    <property type="project" value="UniProtKB-UniRule"/>
</dbReference>
<dbReference type="GO" id="GO:0009378">
    <property type="term" value="F:four-way junction helicase activity"/>
    <property type="evidence" value="ECO:0007669"/>
    <property type="project" value="InterPro"/>
</dbReference>
<dbReference type="GO" id="GO:0006310">
    <property type="term" value="P:DNA recombination"/>
    <property type="evidence" value="ECO:0007669"/>
    <property type="project" value="UniProtKB-UniRule"/>
</dbReference>
<dbReference type="GO" id="GO:0006281">
    <property type="term" value="P:DNA repair"/>
    <property type="evidence" value="ECO:0007669"/>
    <property type="project" value="UniProtKB-UniRule"/>
</dbReference>
<dbReference type="CDD" id="cd14332">
    <property type="entry name" value="UBA_RuvA_C"/>
    <property type="match status" value="1"/>
</dbReference>
<dbReference type="Gene3D" id="1.10.150.20">
    <property type="entry name" value="5' to 3' exonuclease, C-terminal subdomain"/>
    <property type="match status" value="1"/>
</dbReference>
<dbReference type="Gene3D" id="1.10.8.10">
    <property type="entry name" value="DNA helicase RuvA subunit, C-terminal domain"/>
    <property type="match status" value="1"/>
</dbReference>
<dbReference type="Gene3D" id="2.40.50.140">
    <property type="entry name" value="Nucleic acid-binding proteins"/>
    <property type="match status" value="1"/>
</dbReference>
<dbReference type="HAMAP" id="MF_00031">
    <property type="entry name" value="DNA_HJ_migration_RuvA"/>
    <property type="match status" value="1"/>
</dbReference>
<dbReference type="InterPro" id="IPR013849">
    <property type="entry name" value="DNA_helicase_Holl-junc_RuvA_I"/>
</dbReference>
<dbReference type="InterPro" id="IPR003583">
    <property type="entry name" value="Hlx-hairpin-Hlx_DNA-bd_motif"/>
</dbReference>
<dbReference type="InterPro" id="IPR012340">
    <property type="entry name" value="NA-bd_OB-fold"/>
</dbReference>
<dbReference type="InterPro" id="IPR000085">
    <property type="entry name" value="RuvA"/>
</dbReference>
<dbReference type="InterPro" id="IPR010994">
    <property type="entry name" value="RuvA_2-like"/>
</dbReference>
<dbReference type="InterPro" id="IPR011114">
    <property type="entry name" value="RuvA_C"/>
</dbReference>
<dbReference type="InterPro" id="IPR036267">
    <property type="entry name" value="RuvA_C_sf"/>
</dbReference>
<dbReference type="NCBIfam" id="TIGR00084">
    <property type="entry name" value="ruvA"/>
    <property type="match status" value="1"/>
</dbReference>
<dbReference type="Pfam" id="PF14520">
    <property type="entry name" value="HHH_5"/>
    <property type="match status" value="1"/>
</dbReference>
<dbReference type="Pfam" id="PF07499">
    <property type="entry name" value="RuvA_C"/>
    <property type="match status" value="1"/>
</dbReference>
<dbReference type="Pfam" id="PF01330">
    <property type="entry name" value="RuvA_N"/>
    <property type="match status" value="1"/>
</dbReference>
<dbReference type="SMART" id="SM00278">
    <property type="entry name" value="HhH1"/>
    <property type="match status" value="2"/>
</dbReference>
<dbReference type="SUPFAM" id="SSF46929">
    <property type="entry name" value="DNA helicase RuvA subunit, C-terminal domain"/>
    <property type="match status" value="1"/>
</dbReference>
<dbReference type="SUPFAM" id="SSF50249">
    <property type="entry name" value="Nucleic acid-binding proteins"/>
    <property type="match status" value="1"/>
</dbReference>
<dbReference type="SUPFAM" id="SSF47781">
    <property type="entry name" value="RuvA domain 2-like"/>
    <property type="match status" value="1"/>
</dbReference>
<protein>
    <recommendedName>
        <fullName evidence="1">Holliday junction branch migration complex subunit RuvA</fullName>
    </recommendedName>
</protein>
<name>RUVA_AMOA5</name>
<comment type="function">
    <text evidence="1">The RuvA-RuvB-RuvC complex processes Holliday junction (HJ) DNA during genetic recombination and DNA repair, while the RuvA-RuvB complex plays an important role in the rescue of blocked DNA replication forks via replication fork reversal (RFR). RuvA specifically binds to HJ cruciform DNA, conferring on it an open structure. The RuvB hexamer acts as an ATP-dependent pump, pulling dsDNA into and through the RuvAB complex. HJ branch migration allows RuvC to scan DNA until it finds its consensus sequence, where it cleaves and resolves the cruciform DNA.</text>
</comment>
<comment type="subunit">
    <text evidence="1">Homotetramer. Forms an RuvA(8)-RuvB(12)-Holliday junction (HJ) complex. HJ DNA is sandwiched between 2 RuvA tetramers; dsDNA enters through RuvA and exits via RuvB. An RuvB hexamer assembles on each DNA strand where it exits the tetramer. Each RuvB hexamer is contacted by two RuvA subunits (via domain III) on 2 adjacent RuvB subunits; this complex drives branch migration. In the full resolvosome a probable DNA-RuvA(4)-RuvB(12)-RuvC(2) complex forms which resolves the HJ.</text>
</comment>
<comment type="subcellular location">
    <subcellularLocation>
        <location evidence="1">Cytoplasm</location>
    </subcellularLocation>
</comment>
<comment type="domain">
    <text evidence="1">Has three domains with a flexible linker between the domains II and III and assumes an 'L' shape. Domain III is highly mobile and contacts RuvB.</text>
</comment>
<comment type="similarity">
    <text evidence="1">Belongs to the RuvA family.</text>
</comment>